<feature type="chain" id="PRO_1000049445" description="Glycerol-3-phosphate acyltransferase">
    <location>
        <begin position="1"/>
        <end position="834"/>
    </location>
</feature>
<feature type="short sequence motif" description="HXXXXD motif">
    <location>
        <begin position="309"/>
        <end position="314"/>
    </location>
</feature>
<evidence type="ECO:0000255" key="1">
    <source>
        <dbReference type="HAMAP-Rule" id="MF_00393"/>
    </source>
</evidence>
<proteinExistence type="inferred from homology"/>
<reference key="1">
    <citation type="journal article" date="2005" name="Nat. Biotechnol.">
        <title>Complete genome sequence of the plant commensal Pseudomonas fluorescens Pf-5.</title>
        <authorList>
            <person name="Paulsen I.T."/>
            <person name="Press C.M."/>
            <person name="Ravel J."/>
            <person name="Kobayashi D.Y."/>
            <person name="Myers G.S.A."/>
            <person name="Mavrodi D.V."/>
            <person name="DeBoy R.T."/>
            <person name="Seshadri R."/>
            <person name="Ren Q."/>
            <person name="Madupu R."/>
            <person name="Dodson R.J."/>
            <person name="Durkin A.S."/>
            <person name="Brinkac L.M."/>
            <person name="Daugherty S.C."/>
            <person name="Sullivan S.A."/>
            <person name="Rosovitz M.J."/>
            <person name="Gwinn M.L."/>
            <person name="Zhou L."/>
            <person name="Schneider D.J."/>
            <person name="Cartinhour S.W."/>
            <person name="Nelson W.C."/>
            <person name="Weidman J."/>
            <person name="Watkins K."/>
            <person name="Tran K."/>
            <person name="Khouri H."/>
            <person name="Pierson E.A."/>
            <person name="Pierson L.S. III"/>
            <person name="Thomashow L.S."/>
            <person name="Loper J.E."/>
        </authorList>
    </citation>
    <scope>NUCLEOTIDE SEQUENCE [LARGE SCALE GENOMIC DNA]</scope>
    <source>
        <strain>ATCC BAA-477 / NRRL B-23932 / Pf-5</strain>
    </source>
</reference>
<dbReference type="EC" id="2.3.1.15" evidence="1"/>
<dbReference type="EMBL" id="CP000076">
    <property type="protein sequence ID" value="AAY90448.1"/>
    <property type="molecule type" value="Genomic_DNA"/>
</dbReference>
<dbReference type="RefSeq" id="WP_011059509.1">
    <property type="nucleotide sequence ID" value="NC_004129.6"/>
</dbReference>
<dbReference type="SMR" id="Q4KHJ1"/>
<dbReference type="STRING" id="220664.PFL_1161"/>
<dbReference type="GeneID" id="57474165"/>
<dbReference type="KEGG" id="pfl:PFL_1161"/>
<dbReference type="PATRIC" id="fig|220664.5.peg.1193"/>
<dbReference type="eggNOG" id="COG2937">
    <property type="taxonomic scope" value="Bacteria"/>
</dbReference>
<dbReference type="HOGENOM" id="CLU_015407_0_0_6"/>
<dbReference type="UniPathway" id="UPA00557">
    <property type="reaction ID" value="UER00612"/>
</dbReference>
<dbReference type="Proteomes" id="UP000008540">
    <property type="component" value="Chromosome"/>
</dbReference>
<dbReference type="GO" id="GO:0005886">
    <property type="term" value="C:plasma membrane"/>
    <property type="evidence" value="ECO:0007669"/>
    <property type="project" value="UniProtKB-SubCell"/>
</dbReference>
<dbReference type="GO" id="GO:0004366">
    <property type="term" value="F:glycerol-3-phosphate O-acyltransferase activity"/>
    <property type="evidence" value="ECO:0007669"/>
    <property type="project" value="UniProtKB-UniRule"/>
</dbReference>
<dbReference type="GO" id="GO:0016024">
    <property type="term" value="P:CDP-diacylglycerol biosynthetic process"/>
    <property type="evidence" value="ECO:0007669"/>
    <property type="project" value="UniProtKB-UniRule"/>
</dbReference>
<dbReference type="GO" id="GO:0006631">
    <property type="term" value="P:fatty acid metabolic process"/>
    <property type="evidence" value="ECO:0007669"/>
    <property type="project" value="TreeGrafter"/>
</dbReference>
<dbReference type="CDD" id="cd07993">
    <property type="entry name" value="LPLAT_DHAPAT-like"/>
    <property type="match status" value="1"/>
</dbReference>
<dbReference type="HAMAP" id="MF_00393">
    <property type="entry name" value="Glyc3P_acyltrans"/>
    <property type="match status" value="1"/>
</dbReference>
<dbReference type="InterPro" id="IPR022284">
    <property type="entry name" value="GPAT/DHAPAT"/>
</dbReference>
<dbReference type="InterPro" id="IPR045520">
    <property type="entry name" value="GPAT/DHAPAT_C"/>
</dbReference>
<dbReference type="InterPro" id="IPR041728">
    <property type="entry name" value="GPAT/DHAPAT_LPLAT"/>
</dbReference>
<dbReference type="InterPro" id="IPR028354">
    <property type="entry name" value="GPAT_PlsB"/>
</dbReference>
<dbReference type="InterPro" id="IPR002123">
    <property type="entry name" value="Plipid/glycerol_acylTrfase"/>
</dbReference>
<dbReference type="NCBIfam" id="TIGR03703">
    <property type="entry name" value="plsB"/>
    <property type="match status" value="1"/>
</dbReference>
<dbReference type="NCBIfam" id="NF003441">
    <property type="entry name" value="PRK04974.1"/>
    <property type="match status" value="1"/>
</dbReference>
<dbReference type="PANTHER" id="PTHR12563:SF17">
    <property type="entry name" value="DIHYDROXYACETONE PHOSPHATE ACYLTRANSFERASE"/>
    <property type="match status" value="1"/>
</dbReference>
<dbReference type="PANTHER" id="PTHR12563">
    <property type="entry name" value="GLYCEROL-3-PHOSPHATE ACYLTRANSFERASE"/>
    <property type="match status" value="1"/>
</dbReference>
<dbReference type="Pfam" id="PF01553">
    <property type="entry name" value="Acyltransferase"/>
    <property type="match status" value="1"/>
</dbReference>
<dbReference type="Pfam" id="PF19277">
    <property type="entry name" value="GPAT_C"/>
    <property type="match status" value="1"/>
</dbReference>
<dbReference type="PIRSF" id="PIRSF500064">
    <property type="entry name" value="GPAT"/>
    <property type="match status" value="1"/>
</dbReference>
<dbReference type="PIRSF" id="PIRSF000437">
    <property type="entry name" value="GPAT_DHAPAT"/>
    <property type="match status" value="1"/>
</dbReference>
<dbReference type="SMART" id="SM00563">
    <property type="entry name" value="PlsC"/>
    <property type="match status" value="1"/>
</dbReference>
<dbReference type="SUPFAM" id="SSF69593">
    <property type="entry name" value="Glycerol-3-phosphate (1)-acyltransferase"/>
    <property type="match status" value="1"/>
</dbReference>
<accession>Q4KHJ1</accession>
<protein>
    <recommendedName>
        <fullName evidence="1">Glycerol-3-phosphate acyltransferase</fullName>
        <shortName evidence="1">GPAT</shortName>
        <ecNumber evidence="1">2.3.1.15</ecNumber>
    </recommendedName>
</protein>
<name>PLSB_PSEF5</name>
<organism>
    <name type="scientific">Pseudomonas fluorescens (strain ATCC BAA-477 / NRRL B-23932 / Pf-5)</name>
    <dbReference type="NCBI Taxonomy" id="220664"/>
    <lineage>
        <taxon>Bacteria</taxon>
        <taxon>Pseudomonadati</taxon>
        <taxon>Pseudomonadota</taxon>
        <taxon>Gammaproteobacteria</taxon>
        <taxon>Pseudomonadales</taxon>
        <taxon>Pseudomonadaceae</taxon>
        <taxon>Pseudomonas</taxon>
    </lineage>
</organism>
<comment type="catalytic activity">
    <reaction evidence="1">
        <text>sn-glycerol 3-phosphate + an acyl-CoA = a 1-acyl-sn-glycero-3-phosphate + CoA</text>
        <dbReference type="Rhea" id="RHEA:15325"/>
        <dbReference type="ChEBI" id="CHEBI:57287"/>
        <dbReference type="ChEBI" id="CHEBI:57597"/>
        <dbReference type="ChEBI" id="CHEBI:57970"/>
        <dbReference type="ChEBI" id="CHEBI:58342"/>
        <dbReference type="EC" id="2.3.1.15"/>
    </reaction>
</comment>
<comment type="pathway">
    <text evidence="1">Phospholipid metabolism; CDP-diacylglycerol biosynthesis; CDP-diacylglycerol from sn-glycerol 3-phosphate: step 1/3.</text>
</comment>
<comment type="subcellular location">
    <subcellularLocation>
        <location evidence="1">Cell inner membrane</location>
        <topology evidence="1">Peripheral membrane protein</topology>
        <orientation evidence="1">Cytoplasmic side</orientation>
    </subcellularLocation>
</comment>
<comment type="domain">
    <text evidence="1">The HXXXXD motif is essential for acyltransferase activity and may constitute the binding site for the phosphate moiety of the glycerol-3-phosphate.</text>
</comment>
<comment type="similarity">
    <text evidence="1">Belongs to the GPAT/DAPAT family.</text>
</comment>
<keyword id="KW-0012">Acyltransferase</keyword>
<keyword id="KW-0997">Cell inner membrane</keyword>
<keyword id="KW-1003">Cell membrane</keyword>
<keyword id="KW-0444">Lipid biosynthesis</keyword>
<keyword id="KW-0443">Lipid metabolism</keyword>
<keyword id="KW-0472">Membrane</keyword>
<keyword id="KW-0594">Phospholipid biosynthesis</keyword>
<keyword id="KW-1208">Phospholipid metabolism</keyword>
<keyword id="KW-0808">Transferase</keyword>
<gene>
    <name evidence="1" type="primary">plsB</name>
    <name type="ordered locus">PFL_1161</name>
</gene>
<sequence length="834" mass="94862">MTRSPIRRLVFGTLRRLLYLWVRSETINQSSFTLDLDRSRPVFYVLQNPSLTDLAVVDTECTKAGLPRPVLPVSVGNLLEPAAFFYLTPEPDWLGRQDKRGAPPTLTRLVSALTQNAAEDAQIIPVSVFWGQSPDSESSPWKLLFADSWAVTGRLRRLLSIMILGRKTRVQFSAPINLRELIEHNKGHERTVRMAQRILRVHFRNLKAAVIGPDISHRRNLVKGLLNQPLVKQAILDEAEREKISPEKAKAQALRYGNEIASDYTYTAIRFLEVVLSWFWNKIYDGIKVNHLEGVQKIAQGHEVIYVPCHRSHIDYLLLSYLLFRNGLTPPHIAAGINLNMPVIGGLLRRGGAFFMRRTFKGNPLYTSVFNEYLHTLFTKGFPVEYFVEGGRSRTGRMLQPKTGMLAITLRSFLRSSRMPIVFVPVYIGYERVLEGRTYLGELRGASKKKESIFDIFKVIGALKQRFGQVAVNFGEPIKLAEFLDQEQPDWRTQELGPQYRPAWLNETTNRLGERVAQHLNEAAAINPVNLVALALLSTTRLALDDRAMARVLDLYLALLRRVPYSPHTTLPEGDGRALIQHVKDMDLLAEQSDALGKILYLDEQNAVLMTYYRNNVLHIFALPALLASFFQSSSRMSREQILRYTRALYPYLQSELFIRWPLDELDAVVDQWLEAFVEQGLLRFEKDLYQRPAPSSRHFVLLTLLSKSIAQTLQRFYMAISLLLNSGQNSISAEELEDLCTVMAQRLSILHGLNAPEFFDKSLFRHFIQTLLDQGVLRRDEAGKLSYHEALGELAEGAAKRVLPAEIRLSIRQVALHRSEDAADQLAAPAQND</sequence>